<organism>
    <name type="scientific">Nuphar advena</name>
    <name type="common">Common spatterdock</name>
    <name type="synonym">Nuphar lutea subsp. advena</name>
    <dbReference type="NCBI Taxonomy" id="77108"/>
    <lineage>
        <taxon>Eukaryota</taxon>
        <taxon>Viridiplantae</taxon>
        <taxon>Streptophyta</taxon>
        <taxon>Embryophyta</taxon>
        <taxon>Tracheophyta</taxon>
        <taxon>Spermatophyta</taxon>
        <taxon>Magnoliopsida</taxon>
        <taxon>Nymphaeales</taxon>
        <taxon>Nymphaeaceae</taxon>
        <taxon>Nuphar</taxon>
    </lineage>
</organism>
<protein>
    <recommendedName>
        <fullName evidence="1">NAD(P)H-quinone oxidoreductase subunit 2 B, chloroplastic</fullName>
        <ecNumber evidence="1">7.1.1.-</ecNumber>
    </recommendedName>
    <alternativeName>
        <fullName evidence="1">NAD(P)H dehydrogenase, subunit 2 B</fullName>
    </alternativeName>
    <alternativeName>
        <fullName evidence="1">NADH-plastoquinone oxidoreductase subunit 2 B</fullName>
    </alternativeName>
</protein>
<keyword id="KW-0150">Chloroplast</keyword>
<keyword id="KW-0472">Membrane</keyword>
<keyword id="KW-0520">NAD</keyword>
<keyword id="KW-0521">NADP</keyword>
<keyword id="KW-0934">Plastid</keyword>
<keyword id="KW-0618">Plastoquinone</keyword>
<keyword id="KW-0874">Quinone</keyword>
<keyword id="KW-0793">Thylakoid</keyword>
<keyword id="KW-1278">Translocase</keyword>
<keyword id="KW-0812">Transmembrane</keyword>
<keyword id="KW-1133">Transmembrane helix</keyword>
<keyword id="KW-0813">Transport</keyword>
<feature type="chain" id="PRO_0000391289" description="NAD(P)H-quinone oxidoreductase subunit 2 B, chloroplastic">
    <location>
        <begin position="1"/>
        <end position="510"/>
    </location>
</feature>
<feature type="transmembrane region" description="Helical" evidence="1">
    <location>
        <begin position="24"/>
        <end position="44"/>
    </location>
</feature>
<feature type="transmembrane region" description="Helical" evidence="1">
    <location>
        <begin position="57"/>
        <end position="77"/>
    </location>
</feature>
<feature type="transmembrane region" description="Helical" evidence="1">
    <location>
        <begin position="99"/>
        <end position="119"/>
    </location>
</feature>
<feature type="transmembrane region" description="Helical" evidence="1">
    <location>
        <begin position="124"/>
        <end position="144"/>
    </location>
</feature>
<feature type="transmembrane region" description="Helical" evidence="1">
    <location>
        <begin position="149"/>
        <end position="169"/>
    </location>
</feature>
<feature type="transmembrane region" description="Helical" evidence="1">
    <location>
        <begin position="183"/>
        <end position="203"/>
    </location>
</feature>
<feature type="transmembrane region" description="Helical" evidence="1">
    <location>
        <begin position="229"/>
        <end position="249"/>
    </location>
</feature>
<feature type="transmembrane region" description="Helical" evidence="1">
    <location>
        <begin position="295"/>
        <end position="315"/>
    </location>
</feature>
<feature type="transmembrane region" description="Helical" evidence="1">
    <location>
        <begin position="323"/>
        <end position="343"/>
    </location>
</feature>
<feature type="transmembrane region" description="Helical" evidence="1">
    <location>
        <begin position="354"/>
        <end position="374"/>
    </location>
</feature>
<feature type="transmembrane region" description="Helical" evidence="1">
    <location>
        <begin position="395"/>
        <end position="415"/>
    </location>
</feature>
<feature type="transmembrane region" description="Helical" evidence="1">
    <location>
        <begin position="418"/>
        <end position="438"/>
    </location>
</feature>
<feature type="transmembrane region" description="Helical" evidence="1">
    <location>
        <begin position="484"/>
        <end position="504"/>
    </location>
</feature>
<accession>P0CD03</accession>
<accession>A1XG00</accession>
<gene>
    <name evidence="1" type="primary">ndhB2</name>
</gene>
<evidence type="ECO:0000255" key="1">
    <source>
        <dbReference type="HAMAP-Rule" id="MF_00445"/>
    </source>
</evidence>
<dbReference type="EC" id="7.1.1.-" evidence="1"/>
<dbReference type="EMBL" id="DQ354691">
    <property type="protein sequence ID" value="ABC60519.1"/>
    <property type="molecule type" value="Genomic_DNA"/>
</dbReference>
<dbReference type="SMR" id="P0CD03"/>
<dbReference type="GO" id="GO:0009535">
    <property type="term" value="C:chloroplast thylakoid membrane"/>
    <property type="evidence" value="ECO:0007669"/>
    <property type="project" value="UniProtKB-SubCell"/>
</dbReference>
<dbReference type="GO" id="GO:0008137">
    <property type="term" value="F:NADH dehydrogenase (ubiquinone) activity"/>
    <property type="evidence" value="ECO:0007669"/>
    <property type="project" value="InterPro"/>
</dbReference>
<dbReference type="GO" id="GO:0048038">
    <property type="term" value="F:quinone binding"/>
    <property type="evidence" value="ECO:0007669"/>
    <property type="project" value="UniProtKB-KW"/>
</dbReference>
<dbReference type="GO" id="GO:0042773">
    <property type="term" value="P:ATP synthesis coupled electron transport"/>
    <property type="evidence" value="ECO:0007669"/>
    <property type="project" value="InterPro"/>
</dbReference>
<dbReference type="GO" id="GO:0019684">
    <property type="term" value="P:photosynthesis, light reaction"/>
    <property type="evidence" value="ECO:0007669"/>
    <property type="project" value="UniProtKB-UniRule"/>
</dbReference>
<dbReference type="HAMAP" id="MF_00445">
    <property type="entry name" value="NDH1_NuoN_1"/>
    <property type="match status" value="1"/>
</dbReference>
<dbReference type="InterPro" id="IPR010096">
    <property type="entry name" value="NADH-Q_OxRdtase_suN/2"/>
</dbReference>
<dbReference type="InterPro" id="IPR001750">
    <property type="entry name" value="ND/Mrp_TM"/>
</dbReference>
<dbReference type="InterPro" id="IPR045693">
    <property type="entry name" value="Ndh2_N"/>
</dbReference>
<dbReference type="NCBIfam" id="TIGR01770">
    <property type="entry name" value="NDH_I_N"/>
    <property type="match status" value="1"/>
</dbReference>
<dbReference type="NCBIfam" id="NF002701">
    <property type="entry name" value="PRK02504.1"/>
    <property type="match status" value="1"/>
</dbReference>
<dbReference type="PANTHER" id="PTHR22773">
    <property type="entry name" value="NADH DEHYDROGENASE"/>
    <property type="match status" value="1"/>
</dbReference>
<dbReference type="Pfam" id="PF19530">
    <property type="entry name" value="Ndh2_N"/>
    <property type="match status" value="1"/>
</dbReference>
<dbReference type="Pfam" id="PF00361">
    <property type="entry name" value="Proton_antipo_M"/>
    <property type="match status" value="1"/>
</dbReference>
<dbReference type="PRINTS" id="PR01434">
    <property type="entry name" value="NADHDHGNASE5"/>
</dbReference>
<sequence length="510" mass="56625">MIWHVQNENFILDSTRIFMKAFHLLLFNGSFIFPECILIFGLILLLMIDSTSDQKDTPWLYFISSTSLVMSITALLFRWREEPMISFSGNFQTNNFNEIFQFLILLCSTLCIPLSVEYIECTEMAITEFLLFVLTATLGGMFLCGANDLITIFVAPECFSLCSYLLSGYTKRDVRSNEATTKYLLMGGASSSILVYGFSWLYGSSGGEIELQEIVNGLINTQMYNSPGISIALISITVGIGFKLSPAPFHQWTPDVYEGSPTPVVAFLSVTSKVAASASATRIFDIPFYFSSNEWHLLLEILAILSMILGNLIAITQTSMKRMLAYSSIGQIGYVIIGIIVGDSNDGYASMITYMLFYISMNLGTFACIVLFGLRTGTDNIRDYAGLYTKDPFSALSSALCLLSLGGIPPLAGFFGKLYLFWCGWQAGLYFLVSIGLLTSVVSIYYYLKIIKLLMTGRNKEITPHVRNYRRSPLRSNNSIELSMIVCVIASTIPGISMNPIIAIAQDTLF</sequence>
<proteinExistence type="inferred from homology"/>
<comment type="function">
    <text evidence="1">NDH shuttles electrons from NAD(P)H:plastoquinone, via FMN and iron-sulfur (Fe-S) centers, to quinones in the photosynthetic chain and possibly in a chloroplast respiratory chain. The immediate electron acceptor for the enzyme in this species is believed to be plastoquinone. Couples the redox reaction to proton translocation, and thus conserves the redox energy in a proton gradient.</text>
</comment>
<comment type="catalytic activity">
    <reaction evidence="1">
        <text>a plastoquinone + NADH + (n+1) H(+)(in) = a plastoquinol + NAD(+) + n H(+)(out)</text>
        <dbReference type="Rhea" id="RHEA:42608"/>
        <dbReference type="Rhea" id="RHEA-COMP:9561"/>
        <dbReference type="Rhea" id="RHEA-COMP:9562"/>
        <dbReference type="ChEBI" id="CHEBI:15378"/>
        <dbReference type="ChEBI" id="CHEBI:17757"/>
        <dbReference type="ChEBI" id="CHEBI:57540"/>
        <dbReference type="ChEBI" id="CHEBI:57945"/>
        <dbReference type="ChEBI" id="CHEBI:62192"/>
    </reaction>
</comment>
<comment type="catalytic activity">
    <reaction evidence="1">
        <text>a plastoquinone + NADPH + (n+1) H(+)(in) = a plastoquinol + NADP(+) + n H(+)(out)</text>
        <dbReference type="Rhea" id="RHEA:42612"/>
        <dbReference type="Rhea" id="RHEA-COMP:9561"/>
        <dbReference type="Rhea" id="RHEA-COMP:9562"/>
        <dbReference type="ChEBI" id="CHEBI:15378"/>
        <dbReference type="ChEBI" id="CHEBI:17757"/>
        <dbReference type="ChEBI" id="CHEBI:57783"/>
        <dbReference type="ChEBI" id="CHEBI:58349"/>
        <dbReference type="ChEBI" id="CHEBI:62192"/>
    </reaction>
</comment>
<comment type="subunit">
    <text evidence="1">NDH is composed of at least 16 different subunits, 5 of which are encoded in the nucleus.</text>
</comment>
<comment type="subcellular location">
    <subcellularLocation>
        <location evidence="1">Plastid</location>
        <location evidence="1">Chloroplast thylakoid membrane</location>
        <topology evidence="1">Multi-pass membrane protein</topology>
    </subcellularLocation>
</comment>
<comment type="similarity">
    <text evidence="1">Belongs to the complex I subunit 2 family.</text>
</comment>
<geneLocation type="chloroplast"/>
<name>NU2C2_NUPAD</name>
<reference key="1">
    <citation type="journal article" date="2007" name="BMC Genomics">
        <title>Comparative chloroplast genomics: analyses including new sequences from the angiosperms Nuphar advena and Ranunculus macranthus.</title>
        <authorList>
            <person name="Raubeson L.A."/>
            <person name="Peery R."/>
            <person name="Chumley T.W."/>
            <person name="Dziubek C."/>
            <person name="Fourcade H.M."/>
            <person name="Boore J.L."/>
            <person name="Jansen R.K."/>
        </authorList>
    </citation>
    <scope>NUCLEOTIDE SEQUENCE [LARGE SCALE GENOMIC DNA]</scope>
</reference>